<accession>P24821</accession>
<accession>C9IYT7</accession>
<accession>C9J575</accession>
<accession>C9J6D9</accession>
<accession>C9J848</accession>
<accession>Q14583</accession>
<accession>Q15567</accession>
<accession>Q5T7S3</accession>
<organism>
    <name type="scientific">Homo sapiens</name>
    <name type="common">Human</name>
    <dbReference type="NCBI Taxonomy" id="9606"/>
    <lineage>
        <taxon>Eukaryota</taxon>
        <taxon>Metazoa</taxon>
        <taxon>Chordata</taxon>
        <taxon>Craniata</taxon>
        <taxon>Vertebrata</taxon>
        <taxon>Euteleostomi</taxon>
        <taxon>Mammalia</taxon>
        <taxon>Eutheria</taxon>
        <taxon>Euarchontoglires</taxon>
        <taxon>Primates</taxon>
        <taxon>Haplorrhini</taxon>
        <taxon>Catarrhini</taxon>
        <taxon>Hominidae</taxon>
        <taxon>Homo</taxon>
    </lineage>
</organism>
<comment type="function">
    <text evidence="12">Extracellular matrix protein implicated in guidance of migrating neurons as well as axons during development, synaptic plasticity as well as neuronal regeneration. Promotes neurite outgrowth from cortical neurons grown on a monolayer of astrocytes. Ligand for integrins alpha-8/beta-1, alpha-9/beta-1, alpha-V/beta-3 and alpha-V/beta-6. In tumors, stimulates angiogenesis by elongation, migration and sprouting of endothelial cells (PubMed:19884327).</text>
</comment>
<comment type="subunit">
    <text evidence="13 19">Homohexamer; disulfide-linked. A homotrimer may be formed in the triple coiled-coil region and may be stabilized by disulfide rings at both ends. Two of such half-hexabrachions may be disulfide linked within the central globule. Interacts with CSPG4 (PubMed:8824254). Interacts (via the 3rd fibronectin type-III domain) with integrin ITGA9:ITGB1 (PubMed:22654117).</text>
</comment>
<comment type="interaction">
    <interactant intactId="EBI-9979894">
        <id>P24821</id>
    </interactant>
    <interactant intactId="EBI-2464511">
        <id>P20908</id>
        <label>COL5A1</label>
    </interactant>
    <organismsDiffer>false</organismsDiffer>
    <experiments>2</experiments>
</comment>
<comment type="interaction">
    <interactant intactId="EBI-9979894">
        <id>P24821</id>
    </interactant>
    <interactant intactId="EBI-528701">
        <id>O00206</id>
        <label>TLR4</label>
    </interactant>
    <organismsDiffer>false</organismsDiffer>
    <experiments>4</experiments>
</comment>
<comment type="subcellular location">
    <subcellularLocation>
        <location>Secreted</location>
        <location>Extracellular space</location>
        <location>Extracellular matrix</location>
    </subcellularLocation>
</comment>
<comment type="alternative products">
    <event type="alternative splicing"/>
    <isoform>
        <id>P24821-1</id>
        <name>1</name>
        <sequence type="displayed"/>
    </isoform>
    <isoform>
        <id>P24821-2</id>
        <name>2</name>
        <name>HT-5</name>
        <sequence type="described" ref="VSP_001412 VSP_001413"/>
    </isoform>
    <isoform>
        <id>P24821-3</id>
        <name>3</name>
        <sequence type="described" ref="VSP_001412"/>
    </isoform>
    <isoform>
        <id>P24821-4</id>
        <name>4</name>
        <name>HT-33</name>
        <sequence type="described" ref="VSP_001413"/>
    </isoform>
    <isoform>
        <id>P24821-5</id>
        <name>5</name>
        <sequence type="described" ref="VSP_001414"/>
    </isoform>
    <isoform>
        <id>P24821-6</id>
        <name>6</name>
        <name>P31</name>
        <sequence type="described" ref="VSP_001415"/>
    </isoform>
    <text>Isoforms are produced in a tissue- and time-specific manner during development.</text>
</comment>
<comment type="tissue specificity">
    <text evidence="17">Detected in fibroblasts (at protein level).</text>
</comment>
<comment type="disease" evidence="14">
    <disease id="DI-04030">
        <name>Deafness, autosomal dominant, 56</name>
        <acronym>DFNA56</acronym>
        <description>A form of non-syndromic sensorineural hearing loss. Sensorineural deafness results from damage to the neural receptors of the inner ear, the nerve pathways to the brain, or the area of the brain that receives sound information. DFNA56 is characterized by progressive hearing impairment with postlingual onset.</description>
        <dbReference type="MIM" id="615629"/>
    </disease>
    <text>The disease is caused by variants affecting the gene represented in this entry.</text>
</comment>
<comment type="similarity">
    <text evidence="22">Belongs to the tenascin family.</text>
</comment>
<comment type="online information" name="Atlas of Genetics and Cytogenetics in Oncology and Haematology">
    <link uri="https://atlasgeneticsoncology.org/gene/42597/TNC"/>
</comment>
<reference key="1">
    <citation type="journal article" date="1991" name="J. Biol. Chem.">
        <title>The complete cDNA sequence of human hexabrachion (Tenascin). A multidomain protein containing unique epidermal growth factor repeats.</title>
        <authorList>
            <person name="Nies D.E."/>
            <person name="Hemesath T.J."/>
            <person name="Kim J.H."/>
            <person name="Gulcher J.R."/>
            <person name="Stefansson K."/>
        </authorList>
    </citation>
    <scope>NUCLEOTIDE SEQUENCE [MRNA] (ISOFORM 1)</scope>
    <scope>VARIANTS ARG-539; LEU-1677 AND GLN-2008</scope>
</reference>
<reference key="2">
    <citation type="journal article" date="1991" name="Nucleic Acids Res.">
        <title>Human tenascin: primary structure, pre-mRNA splicing patterns and localization of the epitopes recognized by two monoclonal antibodies.</title>
        <authorList>
            <person name="Siri A."/>
            <person name="Carnemolla B."/>
            <person name="Saginati M."/>
            <person name="Leprini A."/>
            <person name="Casari G."/>
            <person name="Baralle F."/>
            <person name="Zardi L."/>
        </authorList>
    </citation>
    <scope>NUCLEOTIDE SEQUENCE [MRNA] (ISOFORMS 1; 2; 4 AND 5)</scope>
    <scope>PROTEIN SEQUENCE OF 23-32</scope>
    <scope>VARIANTS ARG-680 AND GLN-2008</scope>
    <source>
        <tissue>Fetal brain</tissue>
        <tissue>Melanoma</tissue>
    </source>
</reference>
<reference key="3">
    <citation type="journal article" date="1991" name="Proc. Natl. Acad. Sci. U.S.A.">
        <title>Structure of the human hexabrachion (tenascin) gene.</title>
        <authorList>
            <person name="Gulcher J.R."/>
            <person name="Nies D.E."/>
            <person name="Alexakos M.J."/>
            <person name="Ravikant N.A."/>
            <person name="Sturgill M.E."/>
            <person name="Marton L.S."/>
            <person name="Stefansson K."/>
        </authorList>
    </citation>
    <scope>NUCLEOTIDE SEQUENCE [MRNA] (ISOFORM 1)</scope>
    <scope>VARIANTS ARG-539; LEU-1677 AND GLN-2008</scope>
</reference>
<reference key="4">
    <citation type="journal article" date="1995" name="J. Biol. Chem.">
        <title>Human tenascin gene. Structure of the 5'-region, identification, and characterization of the transcription regulatory sequences.</title>
        <authorList>
            <person name="Gherzi R."/>
            <person name="Carnemolla B."/>
            <person name="Siri A."/>
            <person name="Ponassi M."/>
            <person name="Balza E."/>
            <person name="Zardi L."/>
        </authorList>
    </citation>
    <scope>NUCLEOTIDE SEQUENCE [MRNA] (ISOFORM 1)</scope>
    <scope>VARIANTS LEU-1677 AND GLN-2008</scope>
</reference>
<reference key="5">
    <citation type="journal article" date="2004" name="Nature">
        <title>DNA sequence and analysis of human chromosome 9.</title>
        <authorList>
            <person name="Humphray S.J."/>
            <person name="Oliver K."/>
            <person name="Hunt A.R."/>
            <person name="Plumb R.W."/>
            <person name="Loveland J.E."/>
            <person name="Howe K.L."/>
            <person name="Andrews T.D."/>
            <person name="Searle S."/>
            <person name="Hunt S.E."/>
            <person name="Scott C.E."/>
            <person name="Jones M.C."/>
            <person name="Ainscough R."/>
            <person name="Almeida J.P."/>
            <person name="Ambrose K.D."/>
            <person name="Ashwell R.I.S."/>
            <person name="Babbage A.K."/>
            <person name="Babbage S."/>
            <person name="Bagguley C.L."/>
            <person name="Bailey J."/>
            <person name="Banerjee R."/>
            <person name="Barker D.J."/>
            <person name="Barlow K.F."/>
            <person name="Bates K."/>
            <person name="Beasley H."/>
            <person name="Beasley O."/>
            <person name="Bird C.P."/>
            <person name="Bray-Allen S."/>
            <person name="Brown A.J."/>
            <person name="Brown J.Y."/>
            <person name="Burford D."/>
            <person name="Burrill W."/>
            <person name="Burton J."/>
            <person name="Carder C."/>
            <person name="Carter N.P."/>
            <person name="Chapman J.C."/>
            <person name="Chen Y."/>
            <person name="Clarke G."/>
            <person name="Clark S.Y."/>
            <person name="Clee C.M."/>
            <person name="Clegg S."/>
            <person name="Collier R.E."/>
            <person name="Corby N."/>
            <person name="Crosier M."/>
            <person name="Cummings A.T."/>
            <person name="Davies J."/>
            <person name="Dhami P."/>
            <person name="Dunn M."/>
            <person name="Dutta I."/>
            <person name="Dyer L.W."/>
            <person name="Earthrowl M.E."/>
            <person name="Faulkner L."/>
            <person name="Fleming C.J."/>
            <person name="Frankish A."/>
            <person name="Frankland J.A."/>
            <person name="French L."/>
            <person name="Fricker D.G."/>
            <person name="Garner P."/>
            <person name="Garnett J."/>
            <person name="Ghori J."/>
            <person name="Gilbert J.G.R."/>
            <person name="Glison C."/>
            <person name="Grafham D.V."/>
            <person name="Gribble S."/>
            <person name="Griffiths C."/>
            <person name="Griffiths-Jones S."/>
            <person name="Grocock R."/>
            <person name="Guy J."/>
            <person name="Hall R.E."/>
            <person name="Hammond S."/>
            <person name="Harley J.L."/>
            <person name="Harrison E.S.I."/>
            <person name="Hart E.A."/>
            <person name="Heath P.D."/>
            <person name="Henderson C.D."/>
            <person name="Hopkins B.L."/>
            <person name="Howard P.J."/>
            <person name="Howden P.J."/>
            <person name="Huckle E."/>
            <person name="Johnson C."/>
            <person name="Johnson D."/>
            <person name="Joy A.A."/>
            <person name="Kay M."/>
            <person name="Keenan S."/>
            <person name="Kershaw J.K."/>
            <person name="Kimberley A.M."/>
            <person name="King A."/>
            <person name="Knights A."/>
            <person name="Laird G.K."/>
            <person name="Langford C."/>
            <person name="Lawlor S."/>
            <person name="Leongamornlert D.A."/>
            <person name="Leversha M."/>
            <person name="Lloyd C."/>
            <person name="Lloyd D.M."/>
            <person name="Lovell J."/>
            <person name="Martin S."/>
            <person name="Mashreghi-Mohammadi M."/>
            <person name="Matthews L."/>
            <person name="McLaren S."/>
            <person name="McLay K.E."/>
            <person name="McMurray A."/>
            <person name="Milne S."/>
            <person name="Nickerson T."/>
            <person name="Nisbett J."/>
            <person name="Nordsiek G."/>
            <person name="Pearce A.V."/>
            <person name="Peck A.I."/>
            <person name="Porter K.M."/>
            <person name="Pandian R."/>
            <person name="Pelan S."/>
            <person name="Phillimore B."/>
            <person name="Povey S."/>
            <person name="Ramsey Y."/>
            <person name="Rand V."/>
            <person name="Scharfe M."/>
            <person name="Sehra H.K."/>
            <person name="Shownkeen R."/>
            <person name="Sims S.K."/>
            <person name="Skuce C.D."/>
            <person name="Smith M."/>
            <person name="Steward C.A."/>
            <person name="Swarbreck D."/>
            <person name="Sycamore N."/>
            <person name="Tester J."/>
            <person name="Thorpe A."/>
            <person name="Tracey A."/>
            <person name="Tromans A."/>
            <person name="Thomas D.W."/>
            <person name="Wall M."/>
            <person name="Wallis J.M."/>
            <person name="West A.P."/>
            <person name="Whitehead S.L."/>
            <person name="Willey D.L."/>
            <person name="Williams S.A."/>
            <person name="Wilming L."/>
            <person name="Wray P.W."/>
            <person name="Young L."/>
            <person name="Ashurst J.L."/>
            <person name="Coulson A."/>
            <person name="Blocker H."/>
            <person name="Durbin R.M."/>
            <person name="Sulston J.E."/>
            <person name="Hubbard T."/>
            <person name="Jackson M.J."/>
            <person name="Bentley D.R."/>
            <person name="Beck S."/>
            <person name="Rogers J."/>
            <person name="Dunham I."/>
        </authorList>
    </citation>
    <scope>NUCLEOTIDE SEQUENCE [LARGE SCALE GENOMIC DNA]</scope>
</reference>
<reference key="6">
    <citation type="journal article" date="1994" name="Biochim. Biophys. Acta">
        <title>Analysis of aggrecan and tenascin gene expression in mouse skeletal tissues by northern and in situ hybridization using species specific cDNA probes.</title>
        <authorList>
            <person name="Glumoff V."/>
            <person name="Savontaus M."/>
            <person name="Vehanen J."/>
            <person name="Vuorio E."/>
        </authorList>
    </citation>
    <scope>NUCLEOTIDE SEQUENCE [MRNA] OF 46-125 (ISOFORMS 1/2/3/4/5/6)</scope>
    <source>
        <tissue>Fetal cartilage</tissue>
    </source>
</reference>
<reference key="7">
    <citation type="journal article" date="1989" name="Proc. Natl. Acad. Sci. U.S.A.">
        <title>An alternatively spliced region of the human hexabrachion contains a repeat of potential N-glycosylation sites.</title>
        <authorList>
            <person name="Gulcher J.R."/>
            <person name="Nies D.E."/>
            <person name="Marton L.S."/>
            <person name="Stefansson K."/>
        </authorList>
    </citation>
    <scope>NUCLEOTIDE SEQUENCE [MRNA] OF 431-2055 (ISOFORMS 1 AND 6)</scope>
    <scope>VARIANTS ARG-539; LEU-1677 AND GLN-2008</scope>
    <source>
        <tissue>Glioblastoma</tissue>
    </source>
</reference>
<reference key="8">
    <citation type="journal article" date="1996" name="J. Biol. Chem.">
        <title>Binding of the NG2 proteoglycan to type VI collagen and other extracellular matrix molecules.</title>
        <authorList>
            <person name="Burg M.A."/>
            <person name="Tillet E."/>
            <person name="Timpl R."/>
            <person name="Stallcup W.B."/>
        </authorList>
    </citation>
    <scope>INTERACTION WITH CSPG4</scope>
</reference>
<reference key="9">
    <citation type="journal article" date="2005" name="J. Proteome Res.">
        <title>Human plasma N-glycoproteome analysis by immunoaffinity subtraction, hydrazide chemistry, and mass spectrometry.</title>
        <authorList>
            <person name="Liu T."/>
            <person name="Qian W.-J."/>
            <person name="Gritsenko M.A."/>
            <person name="Camp D.G. II"/>
            <person name="Monroe M.E."/>
            <person name="Moore R.J."/>
            <person name="Smith R.D."/>
        </authorList>
    </citation>
    <scope>GLYCOSYLATION [LARGE SCALE ANALYSIS] AT ASN-1809</scope>
    <source>
        <tissue>Plasma</tissue>
    </source>
</reference>
<reference key="10">
    <citation type="journal article" date="2008" name="Proteomics">
        <title>Identification of N-linked glycoproteins in human milk by hydrophilic interaction liquid chromatography and mass spectrometry.</title>
        <authorList>
            <person name="Picariello G."/>
            <person name="Ferranti P."/>
            <person name="Mamone G."/>
            <person name="Roepstorff P."/>
            <person name="Addeo F."/>
        </authorList>
    </citation>
    <scope>GLYCOSYLATION [LARGE SCALE ANALYSIS] AT ASN-184; ASN-1079; ASN-1093; ASN-1261; ASN-1301; ASN-1485 AND ASN-2162</scope>
    <source>
        <tissue>Milk</tissue>
    </source>
</reference>
<reference key="11">
    <citation type="journal article" date="2009" name="J. Proteome Res.">
        <title>Glycoproteomics analysis of human liver tissue by combination of multiple enzyme digestion and hydrazide chemistry.</title>
        <authorList>
            <person name="Chen R."/>
            <person name="Jiang X."/>
            <person name="Sun D."/>
            <person name="Han G."/>
            <person name="Wang F."/>
            <person name="Ye M."/>
            <person name="Wang L."/>
            <person name="Zou H."/>
        </authorList>
    </citation>
    <scope>GLYCOSYLATION [LARGE SCALE ANALYSIS] AT ASN-1018; ASN-1034; ASN-1184; ASN-1275; ASN-1301; ASN-1366 AND ASN-1485</scope>
    <source>
        <tissue>Liver</tissue>
    </source>
</reference>
<reference key="12">
    <citation type="journal article" date="2010" name="FASEB J.">
        <title>Tenascin-W is a specific marker of glioma-associated blood vessels and stimulates angiogenesis in vitro.</title>
        <authorList>
            <person name="Martina E."/>
            <person name="Degen M."/>
            <person name="Rueegg C."/>
            <person name="Merlo A."/>
            <person name="Lino M.M."/>
            <person name="Chiquet-Ehrismann R."/>
            <person name="Brellier F."/>
        </authorList>
    </citation>
    <scope>FUNCTION</scope>
</reference>
<reference key="13">
    <citation type="journal article" date="2011" name="BMC Syst. Biol.">
        <title>Initial characterization of the human central proteome.</title>
        <authorList>
            <person name="Burkard T.R."/>
            <person name="Planyavsky M."/>
            <person name="Kaupe I."/>
            <person name="Breitwieser F.P."/>
            <person name="Buerckstuemmer T."/>
            <person name="Bennett K.L."/>
            <person name="Superti-Furga G."/>
            <person name="Colinge J."/>
        </authorList>
    </citation>
    <scope>IDENTIFICATION BY MASS SPECTROMETRY [LARGE SCALE ANALYSIS]</scope>
</reference>
<reference key="14">
    <citation type="journal article" date="2012" name="J. Biol. Chem.">
        <title>Polydom/SVEP1 is a ligand for integrin alpha9beta1.</title>
        <authorList>
            <person name="Sato-Nishiuchi R."/>
            <person name="Nakano I."/>
            <person name="Ozawa A."/>
            <person name="Sato Y."/>
            <person name="Takeichi M."/>
            <person name="Kiyozumi D."/>
            <person name="Yamazaki K."/>
            <person name="Yasunaga T."/>
            <person name="Futaki S."/>
            <person name="Sekiguchi K."/>
        </authorList>
    </citation>
    <scope>INTERACTION WITH ITGA9:ITGB1</scope>
</reference>
<reference key="15">
    <citation type="journal article" date="2014" name="J. Proteomics">
        <title>An enzyme assisted RP-RPLC approach for in-depth analysis of human liver phosphoproteome.</title>
        <authorList>
            <person name="Bian Y."/>
            <person name="Song C."/>
            <person name="Cheng K."/>
            <person name="Dong M."/>
            <person name="Wang F."/>
            <person name="Huang J."/>
            <person name="Sun D."/>
            <person name="Wang L."/>
            <person name="Ye M."/>
            <person name="Zou H."/>
        </authorList>
    </citation>
    <scope>PHOSPHORYLATION [LARGE SCALE ANALYSIS] AT SER-65; SER-70; SER-72 AND THR-905</scope>
    <scope>IDENTIFICATION BY MASS SPECTROMETRY [LARGE SCALE ANALYSIS]</scope>
    <source>
        <tissue>Liver</tissue>
    </source>
</reference>
<reference key="16">
    <citation type="journal article" date="2015" name="Cell">
        <title>A single kinase generates the majority of the secreted phosphoproteome.</title>
        <authorList>
            <person name="Tagliabracci V.S."/>
            <person name="Wiley S.E."/>
            <person name="Guo X."/>
            <person name="Kinch L.N."/>
            <person name="Durrant E."/>
            <person name="Wen J."/>
            <person name="Xiao J."/>
            <person name="Cui J."/>
            <person name="Nguyen K.B."/>
            <person name="Engel J.L."/>
            <person name="Coon J.J."/>
            <person name="Grishin N."/>
            <person name="Pinna L.A."/>
            <person name="Pagliarini D.J."/>
            <person name="Dixon J.E."/>
        </authorList>
    </citation>
    <scope>PHOSPHORYLATION AT SER-72</scope>
</reference>
<reference key="17">
    <citation type="journal article" date="2022" name="J. Proteins Proteom.">
        <title>Mass spectrometric analysis of chondroitin sulfate-linked peptides.</title>
        <authorList>
            <person name="Ramarajan M.G."/>
            <person name="Saraswat M."/>
            <person name="Budhraja R."/>
            <person name="Garapati K."/>
            <person name="Raymond K."/>
            <person name="Pandey A."/>
        </authorList>
    </citation>
    <scope>TISSUE SPECIFICITY</scope>
    <scope>GLYCOSYLATION AT SER-72</scope>
</reference>
<reference key="18">
    <citation type="journal article" date="1992" name="Science">
        <title>Structure of a fibronectin type III domain from tenascin phased by MAD analysis of the selenomethionyl protein.</title>
        <authorList>
            <person name="Leahy D.J."/>
            <person name="Hendrickson W.A."/>
            <person name="Aukhil I."/>
            <person name="Erickson H.P."/>
        </authorList>
    </citation>
    <scope>X-RAY CRYSTALLOGRAPHY (1.8 ANGSTROMS) OF FIBRONECTIN TYPE-III 3</scope>
</reference>
<reference key="19">
    <citation type="journal article" date="2013" name="PLoS ONE">
        <title>Exome sequencing and linkage analysis identified tenascin-C (TNC) as a novel causative gene in nonsyndromic hearing loss.</title>
        <authorList>
            <person name="Zhao Y."/>
            <person name="Zhao F."/>
            <person name="Zong L."/>
            <person name="Zhang P."/>
            <person name="Guan L."/>
            <person name="Zhang J."/>
            <person name="Wang D."/>
            <person name="Wang J."/>
            <person name="Chai W."/>
            <person name="Lan L."/>
            <person name="Li Q."/>
            <person name="Han B."/>
            <person name="Yang L."/>
            <person name="Jin X."/>
            <person name="Yang W."/>
            <person name="Hu X."/>
            <person name="Wang X."/>
            <person name="Li N."/>
            <person name="Li Y."/>
            <person name="Petit C."/>
            <person name="Wang J."/>
            <person name="Wang H.Y."/>
            <person name="Wang Q."/>
        </authorList>
    </citation>
    <scope>VARIANTS DFNA56 MET-1773 AND SER-1796</scope>
</reference>
<gene>
    <name type="primary">TNC</name>
    <name type="synonym">HXB</name>
</gene>
<evidence type="ECO:0000250" key="1"/>
<evidence type="ECO:0000255" key="2"/>
<evidence type="ECO:0000255" key="3">
    <source>
        <dbReference type="PROSITE-ProRule" id="PRU00076"/>
    </source>
</evidence>
<evidence type="ECO:0000255" key="4">
    <source>
        <dbReference type="PROSITE-ProRule" id="PRU00316"/>
    </source>
</evidence>
<evidence type="ECO:0000255" key="5">
    <source>
        <dbReference type="PROSITE-ProRule" id="PRU00739"/>
    </source>
</evidence>
<evidence type="ECO:0000269" key="6">
    <source>
    </source>
</evidence>
<evidence type="ECO:0000269" key="7">
    <source>
    </source>
</evidence>
<evidence type="ECO:0000269" key="8">
    <source>
    </source>
</evidence>
<evidence type="ECO:0000269" key="9">
    <source>
    </source>
</evidence>
<evidence type="ECO:0000269" key="10">
    <source>
    </source>
</evidence>
<evidence type="ECO:0000269" key="11">
    <source>
    </source>
</evidence>
<evidence type="ECO:0000269" key="12">
    <source>
    </source>
</evidence>
<evidence type="ECO:0000269" key="13">
    <source>
    </source>
</evidence>
<evidence type="ECO:0000269" key="14">
    <source>
    </source>
</evidence>
<evidence type="ECO:0000269" key="15">
    <source>
    </source>
</evidence>
<evidence type="ECO:0000269" key="16">
    <source>
    </source>
</evidence>
<evidence type="ECO:0000269" key="17">
    <source>
    </source>
</evidence>
<evidence type="ECO:0000269" key="18">
    <source>
    </source>
</evidence>
<evidence type="ECO:0000269" key="19">
    <source>
    </source>
</evidence>
<evidence type="ECO:0000303" key="20">
    <source>
    </source>
</evidence>
<evidence type="ECO:0000303" key="21">
    <source>
    </source>
</evidence>
<evidence type="ECO:0000305" key="22"/>
<evidence type="ECO:0007744" key="23">
    <source>
    </source>
</evidence>
<evidence type="ECO:0007829" key="24">
    <source>
        <dbReference type="PDB" id="2RB8"/>
    </source>
</evidence>
<evidence type="ECO:0007829" key="25">
    <source>
        <dbReference type="PDB" id="2RBL"/>
    </source>
</evidence>
<evidence type="ECO:0007829" key="26">
    <source>
        <dbReference type="PDB" id="5R61"/>
    </source>
</evidence>
<evidence type="ECO:0007829" key="27">
    <source>
        <dbReference type="PDB" id="6BRB"/>
    </source>
</evidence>
<evidence type="ECO:0007829" key="28">
    <source>
        <dbReference type="PDB" id="8FN8"/>
    </source>
</evidence>
<evidence type="ECO:0007829" key="29">
    <source>
        <dbReference type="PDB" id="8FNB"/>
    </source>
</evidence>
<protein>
    <recommendedName>
        <fullName>Tenascin</fullName>
        <shortName>TN</shortName>
    </recommendedName>
    <alternativeName>
        <fullName>Cytotactin</fullName>
    </alternativeName>
    <alternativeName>
        <fullName>GMEM</fullName>
    </alternativeName>
    <alternativeName>
        <fullName>GP 150-225</fullName>
    </alternativeName>
    <alternativeName>
        <fullName>Glioma-associated-extracellular matrix antigen</fullName>
    </alternativeName>
    <alternativeName>
        <fullName>Hexabrachion</fullName>
    </alternativeName>
    <alternativeName>
        <fullName>JI</fullName>
    </alternativeName>
    <alternativeName>
        <fullName>Myotendinous antigen</fullName>
    </alternativeName>
    <alternativeName>
        <fullName>Neuronectin</fullName>
    </alternativeName>
    <alternativeName>
        <fullName>Tenascin-C</fullName>
        <shortName>TN-C</shortName>
    </alternativeName>
</protein>
<proteinExistence type="evidence at protein level"/>
<dbReference type="EMBL" id="M55618">
    <property type="protein sequence ID" value="AAA88083.1"/>
    <property type="molecule type" value="mRNA"/>
</dbReference>
<dbReference type="EMBL" id="X56160">
    <property type="protein sequence ID" value="CAA39628.1"/>
    <property type="molecule type" value="mRNA"/>
</dbReference>
<dbReference type="EMBL" id="X78565">
    <property type="protein sequence ID" value="CAA55309.1"/>
    <property type="molecule type" value="mRNA"/>
</dbReference>
<dbReference type="EMBL" id="AL162425">
    <property type="status" value="NOT_ANNOTATED_CDS"/>
    <property type="molecule type" value="Genomic_DNA"/>
</dbReference>
<dbReference type="EMBL" id="X80280">
    <property type="status" value="NOT_ANNOTATED_CDS"/>
    <property type="molecule type" value="mRNA"/>
</dbReference>
<dbReference type="EMBL" id="M24630">
    <property type="protein sequence ID" value="AAA52703.1"/>
    <property type="molecule type" value="mRNA"/>
</dbReference>
<dbReference type="CCDS" id="CCDS6811.1">
    <molecule id="P24821-1"/>
</dbReference>
<dbReference type="PIR" id="I38337">
    <property type="entry name" value="A32160"/>
</dbReference>
<dbReference type="RefSeq" id="NP_002151.2">
    <molecule id="P24821-1"/>
    <property type="nucleotide sequence ID" value="NM_002160.4"/>
</dbReference>
<dbReference type="RefSeq" id="XP_005252029.1">
    <molecule id="P24821-4"/>
    <property type="nucleotide sequence ID" value="XM_005251972.5"/>
</dbReference>
<dbReference type="RefSeq" id="XP_005252031.1">
    <molecule id="P24821-5"/>
    <property type="nucleotide sequence ID" value="XM_005251974.5"/>
</dbReference>
<dbReference type="RefSeq" id="XP_005252032.1">
    <molecule id="P24821-6"/>
    <property type="nucleotide sequence ID" value="XM_005251975.5"/>
</dbReference>
<dbReference type="RefSeq" id="XP_011516931.1">
    <molecule id="P24821-2"/>
    <property type="nucleotide sequence ID" value="XM_011518629.4"/>
</dbReference>
<dbReference type="RefSeq" id="XP_047279271.1">
    <molecule id="P24821-1"/>
    <property type="nucleotide sequence ID" value="XM_047423315.1"/>
</dbReference>
<dbReference type="RefSeq" id="XP_047279272.1">
    <molecule id="P24821-1"/>
    <property type="nucleotide sequence ID" value="XM_047423316.1"/>
</dbReference>
<dbReference type="RefSeq" id="XP_047279273.1">
    <molecule id="P24821-4"/>
    <property type="nucleotide sequence ID" value="XM_047423317.1"/>
</dbReference>
<dbReference type="RefSeq" id="XP_047279274.1">
    <molecule id="P24821-4"/>
    <property type="nucleotide sequence ID" value="XM_047423318.1"/>
</dbReference>
<dbReference type="RefSeq" id="XP_047279282.1">
    <molecule id="P24821-3"/>
    <property type="nucleotide sequence ID" value="XM_047423326.1"/>
</dbReference>
<dbReference type="RefSeq" id="XP_047279287.1">
    <molecule id="P24821-6"/>
    <property type="nucleotide sequence ID" value="XM_047423331.1"/>
</dbReference>
<dbReference type="RefSeq" id="XP_047279288.1">
    <molecule id="P24821-6"/>
    <property type="nucleotide sequence ID" value="XM_047423332.1"/>
</dbReference>
<dbReference type="PDB" id="1TEN">
    <property type="method" value="X-ray"/>
    <property type="resolution" value="1.80 A"/>
    <property type="chains" value="A=802-891"/>
</dbReference>
<dbReference type="PDB" id="2RB8">
    <property type="method" value="X-ray"/>
    <property type="resolution" value="1.45 A"/>
    <property type="chains" value="A=802-893"/>
</dbReference>
<dbReference type="PDB" id="2RBL">
    <property type="method" value="X-ray"/>
    <property type="resolution" value="2.10 A"/>
    <property type="chains" value="A/B/M=802-893"/>
</dbReference>
<dbReference type="PDB" id="5R5T">
    <property type="method" value="X-ray"/>
    <property type="resolution" value="1.55 A"/>
    <property type="chains" value="A=1979-2196"/>
</dbReference>
<dbReference type="PDB" id="5R5U">
    <property type="method" value="X-ray"/>
    <property type="resolution" value="1.52 A"/>
    <property type="chains" value="A=1979-2196"/>
</dbReference>
<dbReference type="PDB" id="5R5V">
    <property type="method" value="X-ray"/>
    <property type="resolution" value="1.70 A"/>
    <property type="chains" value="A=1979-2196"/>
</dbReference>
<dbReference type="PDB" id="5R5W">
    <property type="method" value="X-ray"/>
    <property type="resolution" value="1.60 A"/>
    <property type="chains" value="A=1979-2196"/>
</dbReference>
<dbReference type="PDB" id="5R5X">
    <property type="method" value="X-ray"/>
    <property type="resolution" value="1.56 A"/>
    <property type="chains" value="A=1979-2196"/>
</dbReference>
<dbReference type="PDB" id="5R5Y">
    <property type="method" value="X-ray"/>
    <property type="resolution" value="1.57 A"/>
    <property type="chains" value="A=1979-2196"/>
</dbReference>
<dbReference type="PDB" id="5R5Z">
    <property type="method" value="X-ray"/>
    <property type="resolution" value="1.67 A"/>
    <property type="chains" value="A=1979-2196"/>
</dbReference>
<dbReference type="PDB" id="5R60">
    <property type="method" value="X-ray"/>
    <property type="resolution" value="1.79 A"/>
    <property type="chains" value="A=1979-2196"/>
</dbReference>
<dbReference type="PDB" id="5R61">
    <property type="method" value="X-ray"/>
    <property type="resolution" value="1.38 A"/>
    <property type="chains" value="A=1979-2196"/>
</dbReference>
<dbReference type="PDB" id="5R62">
    <property type="method" value="X-ray"/>
    <property type="resolution" value="1.40 A"/>
    <property type="chains" value="A=1979-2196"/>
</dbReference>
<dbReference type="PDB" id="5R63">
    <property type="method" value="X-ray"/>
    <property type="resolution" value="1.59 A"/>
    <property type="chains" value="A=1979-2196"/>
</dbReference>
<dbReference type="PDB" id="6BRB">
    <property type="method" value="X-ray"/>
    <property type="resolution" value="2.82 A"/>
    <property type="chains" value="D=809-893"/>
</dbReference>
<dbReference type="PDB" id="6QNV">
    <property type="method" value="X-ray"/>
    <property type="resolution" value="1.40 A"/>
    <property type="chains" value="A=1979-2196"/>
</dbReference>
<dbReference type="PDB" id="8FN8">
    <property type="method" value="X-ray"/>
    <property type="resolution" value="1.89 A"/>
    <property type="chains" value="A=1975-2201"/>
</dbReference>
<dbReference type="PDB" id="8FNB">
    <property type="method" value="X-ray"/>
    <property type="resolution" value="1.80 A"/>
    <property type="chains" value="A/B=1975-2201"/>
</dbReference>
<dbReference type="PDBsum" id="1TEN"/>
<dbReference type="PDBsum" id="2RB8"/>
<dbReference type="PDBsum" id="2RBL"/>
<dbReference type="PDBsum" id="5R5T"/>
<dbReference type="PDBsum" id="5R5U"/>
<dbReference type="PDBsum" id="5R5V"/>
<dbReference type="PDBsum" id="5R5W"/>
<dbReference type="PDBsum" id="5R5X"/>
<dbReference type="PDBsum" id="5R5Y"/>
<dbReference type="PDBsum" id="5R5Z"/>
<dbReference type="PDBsum" id="5R60"/>
<dbReference type="PDBsum" id="5R61"/>
<dbReference type="PDBsum" id="5R62"/>
<dbReference type="PDBsum" id="5R63"/>
<dbReference type="PDBsum" id="6BRB"/>
<dbReference type="PDBsum" id="6QNV"/>
<dbReference type="PDBsum" id="8FN8"/>
<dbReference type="PDBsum" id="8FNB"/>
<dbReference type="SMR" id="P24821"/>
<dbReference type="BioGRID" id="109602">
    <property type="interactions" value="26"/>
</dbReference>
<dbReference type="ComplexPortal" id="CPX-466">
    <property type="entry name" value="Tenascin-C complex"/>
</dbReference>
<dbReference type="CORUM" id="P24821"/>
<dbReference type="FunCoup" id="P24821">
    <property type="interactions" value="615"/>
</dbReference>
<dbReference type="IntAct" id="P24821">
    <property type="interactions" value="6"/>
</dbReference>
<dbReference type="MINT" id="P24821"/>
<dbReference type="STRING" id="9606.ENSP00000265131"/>
<dbReference type="ChEMBL" id="CHEMBL3712856"/>
<dbReference type="UniLectin" id="P24821"/>
<dbReference type="GlyConnect" id="1792">
    <property type="glycosylation" value="72 N-Linked glycans (14 sites)"/>
</dbReference>
<dbReference type="GlyCosmos" id="P24821">
    <property type="glycosylation" value="31 sites, 67 glycans"/>
</dbReference>
<dbReference type="GlyGen" id="P24821">
    <property type="glycosylation" value="34 sites, 199 N-linked glycans (15 sites), 2 O-linked glycans (8 sites)"/>
</dbReference>
<dbReference type="iPTMnet" id="P24821"/>
<dbReference type="PhosphoSitePlus" id="P24821"/>
<dbReference type="SwissPalm" id="P24821"/>
<dbReference type="BioMuta" id="TNC"/>
<dbReference type="DMDM" id="281185495"/>
<dbReference type="CPTAC" id="non-CPTAC-2700"/>
<dbReference type="jPOST" id="P24821"/>
<dbReference type="MassIVE" id="P24821"/>
<dbReference type="PaxDb" id="9606-ENSP00000265131"/>
<dbReference type="PeptideAtlas" id="P24821"/>
<dbReference type="ProteomicsDB" id="54225">
    <molecule id="P24821-1"/>
</dbReference>
<dbReference type="ProteomicsDB" id="54226">
    <molecule id="P24821-2"/>
</dbReference>
<dbReference type="ProteomicsDB" id="54227">
    <molecule id="P24821-3"/>
</dbReference>
<dbReference type="ProteomicsDB" id="54228">
    <molecule id="P24821-4"/>
</dbReference>
<dbReference type="ProteomicsDB" id="54229">
    <molecule id="P24821-5"/>
</dbReference>
<dbReference type="ProteomicsDB" id="54230">
    <molecule id="P24821-6"/>
</dbReference>
<dbReference type="Pumba" id="P24821"/>
<dbReference type="ABCD" id="P24821">
    <property type="antibodies" value="46 sequenced antibodies"/>
</dbReference>
<dbReference type="Antibodypedia" id="1348">
    <property type="antibodies" value="1049 antibodies from 43 providers"/>
</dbReference>
<dbReference type="DNASU" id="3371"/>
<dbReference type="Ensembl" id="ENST00000350763.9">
    <molecule id="P24821-1"/>
    <property type="protein sequence ID" value="ENSP00000265131.4"/>
    <property type="gene ID" value="ENSG00000041982.17"/>
</dbReference>
<dbReference type="Ensembl" id="ENST00000537320.6">
    <molecule id="P24821-6"/>
    <property type="protein sequence ID" value="ENSP00000443478.1"/>
    <property type="gene ID" value="ENSG00000041982.17"/>
</dbReference>
<dbReference type="GeneID" id="3371"/>
<dbReference type="KEGG" id="hsa:3371"/>
<dbReference type="MANE-Select" id="ENST00000350763.9">
    <property type="protein sequence ID" value="ENSP00000265131.4"/>
    <property type="RefSeq nucleotide sequence ID" value="NM_002160.4"/>
    <property type="RefSeq protein sequence ID" value="NP_002151.2"/>
</dbReference>
<dbReference type="UCSC" id="uc004bjj.6">
    <molecule id="P24821-1"/>
    <property type="organism name" value="human"/>
</dbReference>
<dbReference type="AGR" id="HGNC:5318"/>
<dbReference type="CTD" id="3371"/>
<dbReference type="DisGeNET" id="3371"/>
<dbReference type="GeneCards" id="TNC"/>
<dbReference type="HGNC" id="HGNC:5318">
    <property type="gene designation" value="TNC"/>
</dbReference>
<dbReference type="HPA" id="ENSG00000041982">
    <property type="expression patterns" value="Tissue enhanced (lymphoid tissue, smooth muscle)"/>
</dbReference>
<dbReference type="MalaCards" id="TNC"/>
<dbReference type="MIM" id="187380">
    <property type="type" value="gene"/>
</dbReference>
<dbReference type="MIM" id="615629">
    <property type="type" value="phenotype"/>
</dbReference>
<dbReference type="neXtProt" id="NX_P24821"/>
<dbReference type="OpenTargets" id="ENSG00000041982"/>
<dbReference type="Orphanet" id="90635">
    <property type="disease" value="Rare autosomal dominant non-syndromic sensorineural deafness type DFNA"/>
</dbReference>
<dbReference type="PharmGKB" id="PA35103"/>
<dbReference type="VEuPathDB" id="HostDB:ENSG00000041982"/>
<dbReference type="eggNOG" id="KOG1225">
    <property type="taxonomic scope" value="Eukaryota"/>
</dbReference>
<dbReference type="eggNOG" id="KOG2579">
    <property type="taxonomic scope" value="Eukaryota"/>
</dbReference>
<dbReference type="GeneTree" id="ENSGT00940000155188"/>
<dbReference type="HOGENOM" id="CLU_001162_1_1_1"/>
<dbReference type="InParanoid" id="P24821"/>
<dbReference type="OMA" id="HHNGRCE"/>
<dbReference type="OrthoDB" id="442731at2759"/>
<dbReference type="PAN-GO" id="P24821">
    <property type="GO annotations" value="4 GO annotations based on evolutionary models"/>
</dbReference>
<dbReference type="PhylomeDB" id="P24821"/>
<dbReference type="TreeFam" id="TF329915"/>
<dbReference type="PathwayCommons" id="P24821"/>
<dbReference type="Reactome" id="R-HSA-216083">
    <property type="pathway name" value="Integrin cell surface interactions"/>
</dbReference>
<dbReference type="Reactome" id="R-HSA-3000170">
    <property type="pathway name" value="Syndecan interactions"/>
</dbReference>
<dbReference type="Reactome" id="R-HSA-3000178">
    <property type="pathway name" value="ECM proteoglycans"/>
</dbReference>
<dbReference type="Reactome" id="R-HSA-381426">
    <property type="pathway name" value="Regulation of Insulin-like Growth Factor (IGF) transport and uptake by Insulin-like Growth Factor Binding Proteins (IGFBPs)"/>
</dbReference>
<dbReference type="Reactome" id="R-HSA-8957275">
    <property type="pathway name" value="Post-translational protein phosphorylation"/>
</dbReference>
<dbReference type="SignaLink" id="P24821"/>
<dbReference type="SIGNOR" id="P24821"/>
<dbReference type="BioGRID-ORCS" id="3371">
    <property type="hits" value="10 hits in 1156 CRISPR screens"/>
</dbReference>
<dbReference type="CD-CODE" id="FB4E32DD">
    <property type="entry name" value="Presynaptic clusters and postsynaptic densities"/>
</dbReference>
<dbReference type="ChiTaRS" id="TNC">
    <property type="organism name" value="human"/>
</dbReference>
<dbReference type="EvolutionaryTrace" id="P24821"/>
<dbReference type="GeneWiki" id="Tenascin_C"/>
<dbReference type="GenomeRNAi" id="3371"/>
<dbReference type="Pharos" id="P24821">
    <property type="development level" value="Tbio"/>
</dbReference>
<dbReference type="PRO" id="PR:P24821"/>
<dbReference type="Proteomes" id="UP000005640">
    <property type="component" value="Chromosome 9"/>
</dbReference>
<dbReference type="RNAct" id="P24821">
    <property type="molecule type" value="protein"/>
</dbReference>
<dbReference type="Bgee" id="ENSG00000041982">
    <property type="expression patterns" value="Expressed in saphenous vein and 187 other cell types or tissues"/>
</dbReference>
<dbReference type="ExpressionAtlas" id="P24821">
    <property type="expression patterns" value="baseline and differential"/>
</dbReference>
<dbReference type="GO" id="GO:0005604">
    <property type="term" value="C:basement membrane"/>
    <property type="evidence" value="ECO:0000266"/>
    <property type="project" value="ComplexPortal"/>
</dbReference>
<dbReference type="GO" id="GO:0062023">
    <property type="term" value="C:collagen-containing extracellular matrix"/>
    <property type="evidence" value="ECO:0007005"/>
    <property type="project" value="UniProtKB"/>
</dbReference>
<dbReference type="GO" id="GO:0005788">
    <property type="term" value="C:endoplasmic reticulum lumen"/>
    <property type="evidence" value="ECO:0000304"/>
    <property type="project" value="Reactome"/>
</dbReference>
<dbReference type="GO" id="GO:0098965">
    <property type="term" value="C:extracellular matrix of synaptic cleft"/>
    <property type="evidence" value="ECO:0007669"/>
    <property type="project" value="Ensembl"/>
</dbReference>
<dbReference type="GO" id="GO:0005576">
    <property type="term" value="C:extracellular region"/>
    <property type="evidence" value="ECO:0007005"/>
    <property type="project" value="BHF-UCL"/>
</dbReference>
<dbReference type="GO" id="GO:0005615">
    <property type="term" value="C:extracellular space"/>
    <property type="evidence" value="ECO:0007005"/>
    <property type="project" value="UniProtKB"/>
</dbReference>
<dbReference type="GO" id="GO:0005925">
    <property type="term" value="C:focal adhesion"/>
    <property type="evidence" value="ECO:0007005"/>
    <property type="project" value="UniProtKB"/>
</dbReference>
<dbReference type="GO" id="GO:0098978">
    <property type="term" value="C:glutamatergic synapse"/>
    <property type="evidence" value="ECO:0007669"/>
    <property type="project" value="Ensembl"/>
</dbReference>
<dbReference type="GO" id="GO:0005614">
    <property type="term" value="C:interstitial matrix"/>
    <property type="evidence" value="ECO:0007669"/>
    <property type="project" value="Ensembl"/>
</dbReference>
<dbReference type="GO" id="GO:0016020">
    <property type="term" value="C:membrane"/>
    <property type="evidence" value="ECO:0007005"/>
    <property type="project" value="UniProtKB"/>
</dbReference>
<dbReference type="GO" id="GO:0098966">
    <property type="term" value="C:perisynaptic extracellular matrix"/>
    <property type="evidence" value="ECO:0000318"/>
    <property type="project" value="GO_Central"/>
</dbReference>
<dbReference type="GO" id="GO:0090733">
    <property type="term" value="C:tenascin complex"/>
    <property type="evidence" value="ECO:0000266"/>
    <property type="project" value="ComplexPortal"/>
</dbReference>
<dbReference type="GO" id="GO:0005201">
    <property type="term" value="F:extracellular matrix structural constituent"/>
    <property type="evidence" value="ECO:0000250"/>
    <property type="project" value="BHF-UCL"/>
</dbReference>
<dbReference type="GO" id="GO:0005178">
    <property type="term" value="F:integrin binding"/>
    <property type="evidence" value="ECO:0000314"/>
    <property type="project" value="UniProtKB"/>
</dbReference>
<dbReference type="GO" id="GO:0045545">
    <property type="term" value="F:syndecan binding"/>
    <property type="evidence" value="ECO:0000314"/>
    <property type="project" value="MGI"/>
</dbReference>
<dbReference type="GO" id="GO:0060447">
    <property type="term" value="P:bud outgrowth involved in lung branching"/>
    <property type="evidence" value="ECO:0007669"/>
    <property type="project" value="Ensembl"/>
</dbReference>
<dbReference type="GO" id="GO:0007155">
    <property type="term" value="P:cell adhesion"/>
    <property type="evidence" value="ECO:0000304"/>
    <property type="project" value="ProtInc"/>
</dbReference>
<dbReference type="GO" id="GO:0071799">
    <property type="term" value="P:cellular response to prostaglandin D stimulus"/>
    <property type="evidence" value="ECO:0007669"/>
    <property type="project" value="Ensembl"/>
</dbReference>
<dbReference type="GO" id="GO:0071300">
    <property type="term" value="P:cellular response to retinoic acid"/>
    <property type="evidence" value="ECO:0007669"/>
    <property type="project" value="Ensembl"/>
</dbReference>
<dbReference type="GO" id="GO:0071305">
    <property type="term" value="P:cellular response to vitamin D"/>
    <property type="evidence" value="ECO:0007669"/>
    <property type="project" value="Ensembl"/>
</dbReference>
<dbReference type="GO" id="GO:0060739">
    <property type="term" value="P:mesenchymal-epithelial cell signaling involved in prostate gland development"/>
    <property type="evidence" value="ECO:0007669"/>
    <property type="project" value="Ensembl"/>
</dbReference>
<dbReference type="GO" id="GO:0002009">
    <property type="term" value="P:morphogenesis of an epithelium"/>
    <property type="evidence" value="ECO:0000266"/>
    <property type="project" value="ComplexPortal"/>
</dbReference>
<dbReference type="GO" id="GO:0007162">
    <property type="term" value="P:negative regulation of cell adhesion"/>
    <property type="evidence" value="ECO:0007669"/>
    <property type="project" value="Ensembl"/>
</dbReference>
<dbReference type="GO" id="GO:0007528">
    <property type="term" value="P:neuromuscular junction development"/>
    <property type="evidence" value="ECO:0000266"/>
    <property type="project" value="ComplexPortal"/>
</dbReference>
<dbReference type="GO" id="GO:0042475">
    <property type="term" value="P:odontogenesis of dentin-containing tooth"/>
    <property type="evidence" value="ECO:0007669"/>
    <property type="project" value="Ensembl"/>
</dbReference>
<dbReference type="GO" id="GO:0001649">
    <property type="term" value="P:osteoblast differentiation"/>
    <property type="evidence" value="ECO:0007005"/>
    <property type="project" value="UniProtKB"/>
</dbReference>
<dbReference type="GO" id="GO:0014012">
    <property type="term" value="P:peripheral nervous system axon regeneration"/>
    <property type="evidence" value="ECO:0000266"/>
    <property type="project" value="ComplexPortal"/>
</dbReference>
<dbReference type="GO" id="GO:0008284">
    <property type="term" value="P:positive regulation of cell population proliferation"/>
    <property type="evidence" value="ECO:0007669"/>
    <property type="project" value="Ensembl"/>
</dbReference>
<dbReference type="GO" id="GO:0010628">
    <property type="term" value="P:positive regulation of gene expression"/>
    <property type="evidence" value="ECO:0000266"/>
    <property type="project" value="ComplexPortal"/>
</dbReference>
<dbReference type="GO" id="GO:0060740">
    <property type="term" value="P:prostate gland epithelium morphogenesis"/>
    <property type="evidence" value="ECO:0007669"/>
    <property type="project" value="Ensembl"/>
</dbReference>
<dbReference type="GO" id="GO:0030155">
    <property type="term" value="P:regulation of cell adhesion"/>
    <property type="evidence" value="ECO:0000314"/>
    <property type="project" value="ComplexPortal"/>
</dbReference>
<dbReference type="GO" id="GO:0001558">
    <property type="term" value="P:regulation of cell growth"/>
    <property type="evidence" value="ECO:0000314"/>
    <property type="project" value="ComplexPortal"/>
</dbReference>
<dbReference type="GO" id="GO:0030334">
    <property type="term" value="P:regulation of cell migration"/>
    <property type="evidence" value="ECO:0000303"/>
    <property type="project" value="ComplexPortal"/>
</dbReference>
<dbReference type="GO" id="GO:0050727">
    <property type="term" value="P:regulation of inflammatory response"/>
    <property type="evidence" value="ECO:0000266"/>
    <property type="project" value="ComplexPortal"/>
</dbReference>
<dbReference type="GO" id="GO:0045471">
    <property type="term" value="P:response to ethanol"/>
    <property type="evidence" value="ECO:0007669"/>
    <property type="project" value="Ensembl"/>
</dbReference>
<dbReference type="GO" id="GO:0071774">
    <property type="term" value="P:response to fibroblast growth factor"/>
    <property type="evidence" value="ECO:0007669"/>
    <property type="project" value="Ensembl"/>
</dbReference>
<dbReference type="GO" id="GO:0009612">
    <property type="term" value="P:response to mechanical stimulus"/>
    <property type="evidence" value="ECO:0007669"/>
    <property type="project" value="Ensembl"/>
</dbReference>
<dbReference type="GO" id="GO:0009611">
    <property type="term" value="P:response to wounding"/>
    <property type="evidence" value="ECO:0000314"/>
    <property type="project" value="ComplexPortal"/>
</dbReference>
<dbReference type="CDD" id="cd00054">
    <property type="entry name" value="EGF_CA"/>
    <property type="match status" value="4"/>
</dbReference>
<dbReference type="CDD" id="cd00063">
    <property type="entry name" value="FN3"/>
    <property type="match status" value="14"/>
</dbReference>
<dbReference type="CDD" id="cd00087">
    <property type="entry name" value="FReD"/>
    <property type="match status" value="1"/>
</dbReference>
<dbReference type="FunFam" id="2.60.40.10:FF:000099">
    <property type="entry name" value="Fibronectin 1"/>
    <property type="match status" value="1"/>
</dbReference>
<dbReference type="FunFam" id="2.10.25.10:FF:000001">
    <property type="entry name" value="Tenascin C"/>
    <property type="match status" value="14"/>
</dbReference>
<dbReference type="FunFam" id="2.20.25.10:FF:000006">
    <property type="entry name" value="Tenascin C"/>
    <property type="match status" value="1"/>
</dbReference>
<dbReference type="FunFam" id="2.60.40.10:FF:000162">
    <property type="entry name" value="Tenascin C"/>
    <property type="match status" value="1"/>
</dbReference>
<dbReference type="FunFam" id="2.60.40.10:FF:000201">
    <property type="entry name" value="Tenascin C"/>
    <property type="match status" value="1"/>
</dbReference>
<dbReference type="FunFam" id="2.60.40.10:FF:000207">
    <property type="entry name" value="Tenascin C"/>
    <property type="match status" value="1"/>
</dbReference>
<dbReference type="FunFam" id="2.60.40.10:FF:000274">
    <property type="entry name" value="Tenascin C"/>
    <property type="match status" value="1"/>
</dbReference>
<dbReference type="FunFam" id="2.60.40.10:FF:000293">
    <property type="entry name" value="Tenascin C"/>
    <property type="match status" value="1"/>
</dbReference>
<dbReference type="FunFam" id="2.60.40.10:FF:000346">
    <property type="entry name" value="Tenascin C"/>
    <property type="match status" value="4"/>
</dbReference>
<dbReference type="FunFam" id="2.60.40.10:FF:000398">
    <property type="entry name" value="Tenascin C"/>
    <property type="match status" value="1"/>
</dbReference>
<dbReference type="FunFam" id="2.60.40.10:FF:000529">
    <property type="entry name" value="Tenascin C"/>
    <property type="match status" value="1"/>
</dbReference>
<dbReference type="FunFam" id="2.60.40.10:FF:000610">
    <property type="entry name" value="Tenascin C"/>
    <property type="match status" value="1"/>
</dbReference>
<dbReference type="FunFam" id="2.60.40.10:FF:000611">
    <property type="entry name" value="Tenascin C"/>
    <property type="match status" value="1"/>
</dbReference>
<dbReference type="FunFam" id="2.60.40.10:FF:000939">
    <property type="entry name" value="Tenascin C"/>
    <property type="match status" value="1"/>
</dbReference>
<dbReference type="FunFam" id="3.90.215.10:FF:000001">
    <property type="entry name" value="Tenascin isoform 1"/>
    <property type="match status" value="1"/>
</dbReference>
<dbReference type="Gene3D" id="2.20.25.10">
    <property type="match status" value="1"/>
</dbReference>
<dbReference type="Gene3D" id="3.90.215.10">
    <property type="entry name" value="Gamma Fibrinogen, chain A, domain 1"/>
    <property type="match status" value="1"/>
</dbReference>
<dbReference type="Gene3D" id="2.60.40.10">
    <property type="entry name" value="Immunoglobulins"/>
    <property type="match status" value="15"/>
</dbReference>
<dbReference type="Gene3D" id="2.10.25.10">
    <property type="entry name" value="Laminin"/>
    <property type="match status" value="14"/>
</dbReference>
<dbReference type="InterPro" id="IPR050991">
    <property type="entry name" value="ECM_Regulatory_Proteins"/>
</dbReference>
<dbReference type="InterPro" id="IPR000742">
    <property type="entry name" value="EGF-like_dom"/>
</dbReference>
<dbReference type="InterPro" id="IPR013111">
    <property type="entry name" value="EGF_extracell"/>
</dbReference>
<dbReference type="InterPro" id="IPR041161">
    <property type="entry name" value="EGF_Tenascin"/>
</dbReference>
<dbReference type="InterPro" id="IPR036056">
    <property type="entry name" value="Fibrinogen-like_C"/>
</dbReference>
<dbReference type="InterPro" id="IPR014716">
    <property type="entry name" value="Fibrinogen_a/b/g_C_1"/>
</dbReference>
<dbReference type="InterPro" id="IPR002181">
    <property type="entry name" value="Fibrinogen_a/b/g_C_dom"/>
</dbReference>
<dbReference type="InterPro" id="IPR003961">
    <property type="entry name" value="FN3_dom"/>
</dbReference>
<dbReference type="InterPro" id="IPR036116">
    <property type="entry name" value="FN3_sf"/>
</dbReference>
<dbReference type="InterPro" id="IPR013783">
    <property type="entry name" value="Ig-like_fold"/>
</dbReference>
<dbReference type="NCBIfam" id="NF040941">
    <property type="entry name" value="GGGWT_bact"/>
    <property type="match status" value="1"/>
</dbReference>
<dbReference type="PANTHER" id="PTHR46708">
    <property type="entry name" value="TENASCIN"/>
    <property type="match status" value="1"/>
</dbReference>
<dbReference type="PANTHER" id="PTHR46708:SF1">
    <property type="entry name" value="TENASCIN"/>
    <property type="match status" value="1"/>
</dbReference>
<dbReference type="Pfam" id="PF07974">
    <property type="entry name" value="EGF_2"/>
    <property type="match status" value="1"/>
</dbReference>
<dbReference type="Pfam" id="PF25024">
    <property type="entry name" value="EGF_TEN"/>
    <property type="match status" value="1"/>
</dbReference>
<dbReference type="Pfam" id="PF18720">
    <property type="entry name" value="EGF_Tenascin"/>
    <property type="match status" value="2"/>
</dbReference>
<dbReference type="Pfam" id="PF23106">
    <property type="entry name" value="EGF_Teneurin"/>
    <property type="match status" value="3"/>
</dbReference>
<dbReference type="Pfam" id="PF00147">
    <property type="entry name" value="Fibrinogen_C"/>
    <property type="match status" value="1"/>
</dbReference>
<dbReference type="Pfam" id="PF00041">
    <property type="entry name" value="fn3"/>
    <property type="match status" value="15"/>
</dbReference>
<dbReference type="SMART" id="SM00181">
    <property type="entry name" value="EGF"/>
    <property type="match status" value="14"/>
</dbReference>
<dbReference type="SMART" id="SM00186">
    <property type="entry name" value="FBG"/>
    <property type="match status" value="1"/>
</dbReference>
<dbReference type="SMART" id="SM00060">
    <property type="entry name" value="FN3"/>
    <property type="match status" value="15"/>
</dbReference>
<dbReference type="SUPFAM" id="SSF56496">
    <property type="entry name" value="Fibrinogen C-terminal domain-like"/>
    <property type="match status" value="1"/>
</dbReference>
<dbReference type="SUPFAM" id="SSF49265">
    <property type="entry name" value="Fibronectin type III"/>
    <property type="match status" value="12"/>
</dbReference>
<dbReference type="PROSITE" id="PS00022">
    <property type="entry name" value="EGF_1"/>
    <property type="match status" value="15"/>
</dbReference>
<dbReference type="PROSITE" id="PS01186">
    <property type="entry name" value="EGF_2"/>
    <property type="match status" value="15"/>
</dbReference>
<dbReference type="PROSITE" id="PS50026">
    <property type="entry name" value="EGF_3"/>
    <property type="match status" value="5"/>
</dbReference>
<dbReference type="PROSITE" id="PS51406">
    <property type="entry name" value="FIBRINOGEN_C_2"/>
    <property type="match status" value="1"/>
</dbReference>
<dbReference type="PROSITE" id="PS50853">
    <property type="entry name" value="FN3"/>
    <property type="match status" value="15"/>
</dbReference>
<feature type="signal peptide" evidence="8">
    <location>
        <begin position="1"/>
        <end position="22"/>
    </location>
</feature>
<feature type="chain" id="PRO_0000007741" description="Tenascin">
    <location>
        <begin position="23"/>
        <end position="2201"/>
    </location>
</feature>
<feature type="domain" description="EGF-like 1; incomplete" evidence="3">
    <location>
        <begin position="174"/>
        <end position="186"/>
    </location>
</feature>
<feature type="domain" description="EGF-like 2" evidence="3">
    <location>
        <begin position="186"/>
        <end position="217"/>
    </location>
</feature>
<feature type="domain" description="EGF-like 3" evidence="3">
    <location>
        <begin position="217"/>
        <end position="248"/>
    </location>
</feature>
<feature type="domain" description="EGF-like 4" evidence="3">
    <location>
        <begin position="248"/>
        <end position="280"/>
    </location>
</feature>
<feature type="domain" description="EGF-like 5" evidence="3">
    <location>
        <begin position="280"/>
        <end position="311"/>
    </location>
</feature>
<feature type="domain" description="EGF-like 6" evidence="3">
    <location>
        <begin position="311"/>
        <end position="342"/>
    </location>
</feature>
<feature type="domain" description="EGF-like 7" evidence="3">
    <location>
        <begin position="342"/>
        <end position="373"/>
    </location>
</feature>
<feature type="domain" description="EGF-like 8" evidence="3">
    <location>
        <begin position="373"/>
        <end position="404"/>
    </location>
</feature>
<feature type="domain" description="EGF-like 9" evidence="3">
    <location>
        <begin position="404"/>
        <end position="435"/>
    </location>
</feature>
<feature type="domain" description="EGF-like 10" evidence="3">
    <location>
        <begin position="435"/>
        <end position="466"/>
    </location>
</feature>
<feature type="domain" description="EGF-like 11" evidence="3">
    <location>
        <begin position="466"/>
        <end position="497"/>
    </location>
</feature>
<feature type="domain" description="EGF-like 12" evidence="3">
    <location>
        <begin position="497"/>
        <end position="528"/>
    </location>
</feature>
<feature type="domain" description="EGF-like 13" evidence="3">
    <location>
        <begin position="528"/>
        <end position="559"/>
    </location>
</feature>
<feature type="domain" description="EGF-like 14" evidence="3">
    <location>
        <begin position="559"/>
        <end position="590"/>
    </location>
</feature>
<feature type="domain" description="EGF-like 15" evidence="3">
    <location>
        <begin position="590"/>
        <end position="621"/>
    </location>
</feature>
<feature type="domain" description="Fibronectin type-III 1" evidence="4">
    <location>
        <begin position="625"/>
        <end position="715"/>
    </location>
</feature>
<feature type="domain" description="Fibronectin type-III 2" evidence="4">
    <location>
        <begin position="716"/>
        <end position="804"/>
    </location>
</feature>
<feature type="domain" description="Fibronectin type-III 3" evidence="4">
    <location>
        <begin position="805"/>
        <end position="894"/>
    </location>
</feature>
<feature type="domain" description="Fibronectin type-III 4" evidence="4">
    <location>
        <begin position="895"/>
        <end position="990"/>
    </location>
</feature>
<feature type="domain" description="Fibronectin type-III 5" evidence="4">
    <location>
        <begin position="991"/>
        <end position="1075"/>
    </location>
</feature>
<feature type="domain" description="Fibronectin type-III 6" evidence="4">
    <location>
        <begin position="1076"/>
        <end position="1165"/>
    </location>
</feature>
<feature type="domain" description="Fibronectin type-III 7" evidence="4">
    <location>
        <begin position="1167"/>
        <end position="1256"/>
    </location>
</feature>
<feature type="domain" description="Fibronectin type-III 8" evidence="4">
    <location>
        <begin position="1258"/>
        <end position="1350"/>
    </location>
</feature>
<feature type="domain" description="Fibronectin type-III 9" evidence="4">
    <location>
        <begin position="1351"/>
        <end position="1439"/>
    </location>
</feature>
<feature type="domain" description="Fibronectin type-III 10" evidence="4">
    <location>
        <begin position="1440"/>
        <end position="1531"/>
    </location>
</feature>
<feature type="domain" description="Fibronectin type-III 11" evidence="4">
    <location>
        <begin position="1533"/>
        <end position="1621"/>
    </location>
</feature>
<feature type="domain" description="Fibronectin type-III 12" evidence="4">
    <location>
        <begin position="1622"/>
        <end position="1711"/>
    </location>
</feature>
<feature type="domain" description="Fibronectin type-III 13" evidence="4">
    <location>
        <begin position="1712"/>
        <end position="1801"/>
    </location>
</feature>
<feature type="domain" description="Fibronectin type-III 14" evidence="4">
    <location>
        <begin position="1802"/>
        <end position="1888"/>
    </location>
</feature>
<feature type="domain" description="Fibronectin type-III 15" evidence="4">
    <location>
        <begin position="1889"/>
        <end position="1977"/>
    </location>
</feature>
<feature type="domain" description="Fibrinogen C-terminal" evidence="5">
    <location>
        <begin position="1975"/>
        <end position="2190"/>
    </location>
</feature>
<feature type="coiled-coil region" evidence="2">
    <location>
        <begin position="118"/>
        <end position="145"/>
    </location>
</feature>
<feature type="modified residue" description="Phosphoserine" evidence="23">
    <location>
        <position position="65"/>
    </location>
</feature>
<feature type="modified residue" description="Phosphoserine" evidence="23">
    <location>
        <position position="70"/>
    </location>
</feature>
<feature type="modified residue" description="Phosphoserine; by FAM20C" evidence="16 23">
    <location>
        <position position="72"/>
    </location>
</feature>
<feature type="modified residue" description="Phosphothreonine" evidence="23">
    <location>
        <position position="905"/>
    </location>
</feature>
<feature type="glycosylation site" description="N-linked (GlcNAc...) asparagine" evidence="2">
    <location>
        <position position="38"/>
    </location>
</feature>
<feature type="glycosylation site" description="O-linked (Xyl...) (chondroitin sulfate) serine" evidence="17">
    <location>
        <position position="72"/>
    </location>
</feature>
<feature type="glycosylation site" description="N-linked (GlcNAc...) asparagine" evidence="2">
    <location>
        <position position="166"/>
    </location>
</feature>
<feature type="glycosylation site" description="N-linked (GlcNAc...) asparagine" evidence="10">
    <location>
        <position position="184"/>
    </location>
</feature>
<feature type="glycosylation site" description="N-linked (GlcNAc...) asparagine" evidence="2">
    <location>
        <position position="327"/>
    </location>
</feature>
<feature type="glycosylation site" description="N-linked (GlcNAc...) asparagine" evidence="2">
    <location>
        <position position="788"/>
    </location>
</feature>
<feature type="glycosylation site" description="N-linked (GlcNAc...) asparagine" evidence="11">
    <location>
        <position position="1018"/>
    </location>
</feature>
<feature type="glycosylation site" description="N-linked (GlcNAc...) asparagine" evidence="11">
    <location>
        <position position="1034"/>
    </location>
</feature>
<feature type="glycosylation site" description="N-linked (GlcNAc...) asparagine" evidence="10">
    <location>
        <position position="1079"/>
    </location>
</feature>
<feature type="glycosylation site" description="N-linked (GlcNAc...) asparagine" evidence="10">
    <location>
        <position position="1093"/>
    </location>
</feature>
<feature type="glycosylation site" description="N-linked (GlcNAc...) asparagine" evidence="2">
    <location>
        <position position="1119"/>
    </location>
</feature>
<feature type="glycosylation site" description="N-linked (GlcNAc...) asparagine" evidence="11">
    <location>
        <position position="1184"/>
    </location>
</feature>
<feature type="glycosylation site" description="N-linked (GlcNAc...) asparagine" evidence="2">
    <location>
        <position position="1210"/>
    </location>
</feature>
<feature type="glycosylation site" description="N-linked (GlcNAc...) asparagine" evidence="10">
    <location>
        <position position="1261"/>
    </location>
</feature>
<feature type="glycosylation site" description="N-linked (GlcNAc...) asparagine" evidence="11">
    <location>
        <position position="1275"/>
    </location>
</feature>
<feature type="glycosylation site" description="N-linked (GlcNAc...) asparagine" evidence="10 11">
    <location>
        <position position="1301"/>
    </location>
</feature>
<feature type="glycosylation site" description="N-linked (GlcNAc...) asparagine" evidence="11">
    <location>
        <position position="1366"/>
    </location>
</feature>
<feature type="glycosylation site" description="N-linked (GlcNAc...) asparagine" evidence="2">
    <location>
        <position position="1392"/>
    </location>
</feature>
<feature type="glycosylation site" description="N-linked (GlcNAc...) asparagine" evidence="2">
    <location>
        <position position="1445"/>
    </location>
</feature>
<feature type="glycosylation site" description="N-linked (GlcNAc...) asparagine" evidence="2">
    <location>
        <position position="1455"/>
    </location>
</feature>
<feature type="glycosylation site" description="N-linked (GlcNAc...) asparagine" evidence="10 11">
    <location>
        <position position="1485"/>
    </location>
</feature>
<feature type="glycosylation site" description="N-linked (GlcNAc...) asparagine" evidence="2">
    <location>
        <position position="1534"/>
    </location>
</feature>
<feature type="glycosylation site" description="N-linked (GlcNAc...) asparagine" evidence="6">
    <location>
        <position position="1809"/>
    </location>
</feature>
<feature type="glycosylation site" description="N-linked (GlcNAc...) asparagine" evidence="10">
    <location>
        <position position="2162"/>
    </location>
</feature>
<feature type="disulfide bond" evidence="1">
    <location>
        <begin position="190"/>
        <end position="200"/>
    </location>
</feature>
<feature type="disulfide bond" evidence="1">
    <location>
        <begin position="194"/>
        <end position="205"/>
    </location>
</feature>
<feature type="disulfide bond" evidence="1">
    <location>
        <begin position="207"/>
        <end position="216"/>
    </location>
</feature>
<feature type="disulfide bond" evidence="1">
    <location>
        <begin position="221"/>
        <end position="231"/>
    </location>
</feature>
<feature type="disulfide bond" evidence="1">
    <location>
        <begin position="225"/>
        <end position="236"/>
    </location>
</feature>
<feature type="disulfide bond" evidence="1">
    <location>
        <begin position="238"/>
        <end position="247"/>
    </location>
</feature>
<feature type="disulfide bond" evidence="1">
    <location>
        <begin position="252"/>
        <end position="263"/>
    </location>
</feature>
<feature type="disulfide bond" evidence="1">
    <location>
        <begin position="256"/>
        <end position="268"/>
    </location>
</feature>
<feature type="disulfide bond" evidence="1">
    <location>
        <begin position="270"/>
        <end position="279"/>
    </location>
</feature>
<feature type="disulfide bond" evidence="1">
    <location>
        <begin position="284"/>
        <end position="294"/>
    </location>
</feature>
<feature type="disulfide bond" evidence="1">
    <location>
        <begin position="288"/>
        <end position="299"/>
    </location>
</feature>
<feature type="disulfide bond" evidence="1">
    <location>
        <begin position="301"/>
        <end position="310"/>
    </location>
</feature>
<feature type="disulfide bond" evidence="1">
    <location>
        <begin position="315"/>
        <end position="325"/>
    </location>
</feature>
<feature type="disulfide bond" evidence="1">
    <location>
        <begin position="319"/>
        <end position="330"/>
    </location>
</feature>
<feature type="disulfide bond" evidence="1">
    <location>
        <begin position="332"/>
        <end position="341"/>
    </location>
</feature>
<feature type="disulfide bond" evidence="1">
    <location>
        <begin position="346"/>
        <end position="356"/>
    </location>
</feature>
<feature type="disulfide bond" evidence="1">
    <location>
        <begin position="350"/>
        <end position="361"/>
    </location>
</feature>
<feature type="disulfide bond" evidence="1">
    <location>
        <begin position="363"/>
        <end position="372"/>
    </location>
</feature>
<feature type="disulfide bond" evidence="1">
    <location>
        <begin position="377"/>
        <end position="387"/>
    </location>
</feature>
<feature type="disulfide bond" evidence="1">
    <location>
        <begin position="381"/>
        <end position="392"/>
    </location>
</feature>
<feature type="disulfide bond" evidence="1">
    <location>
        <begin position="394"/>
        <end position="403"/>
    </location>
</feature>
<feature type="disulfide bond" evidence="1">
    <location>
        <begin position="408"/>
        <end position="418"/>
    </location>
</feature>
<feature type="disulfide bond" evidence="1">
    <location>
        <begin position="412"/>
        <end position="423"/>
    </location>
</feature>
<feature type="disulfide bond" evidence="1">
    <location>
        <begin position="425"/>
        <end position="434"/>
    </location>
</feature>
<feature type="disulfide bond" evidence="1">
    <location>
        <begin position="439"/>
        <end position="449"/>
    </location>
</feature>
<feature type="disulfide bond" evidence="1">
    <location>
        <begin position="443"/>
        <end position="454"/>
    </location>
</feature>
<feature type="disulfide bond" evidence="1">
    <location>
        <begin position="456"/>
        <end position="465"/>
    </location>
</feature>
<feature type="disulfide bond" evidence="1">
    <location>
        <begin position="470"/>
        <end position="480"/>
    </location>
</feature>
<feature type="disulfide bond" evidence="1">
    <location>
        <begin position="474"/>
        <end position="485"/>
    </location>
</feature>
<feature type="disulfide bond" evidence="1">
    <location>
        <begin position="487"/>
        <end position="496"/>
    </location>
</feature>
<feature type="disulfide bond" evidence="1">
    <location>
        <begin position="501"/>
        <end position="511"/>
    </location>
</feature>
<feature type="disulfide bond" evidence="1">
    <location>
        <begin position="505"/>
        <end position="516"/>
    </location>
</feature>
<feature type="disulfide bond" evidence="1">
    <location>
        <begin position="518"/>
        <end position="527"/>
    </location>
</feature>
<feature type="disulfide bond" evidence="1">
    <location>
        <begin position="532"/>
        <end position="542"/>
    </location>
</feature>
<feature type="disulfide bond" evidence="1">
    <location>
        <begin position="536"/>
        <end position="547"/>
    </location>
</feature>
<feature type="disulfide bond" evidence="1">
    <location>
        <begin position="549"/>
        <end position="558"/>
    </location>
</feature>
<feature type="disulfide bond" evidence="1">
    <location>
        <begin position="563"/>
        <end position="573"/>
    </location>
</feature>
<feature type="disulfide bond" evidence="1">
    <location>
        <begin position="567"/>
        <end position="578"/>
    </location>
</feature>
<feature type="disulfide bond" evidence="1">
    <location>
        <begin position="580"/>
        <end position="589"/>
    </location>
</feature>
<feature type="disulfide bond" evidence="1">
    <location>
        <begin position="594"/>
        <end position="604"/>
    </location>
</feature>
<feature type="disulfide bond" evidence="1">
    <location>
        <begin position="598"/>
        <end position="609"/>
    </location>
</feature>
<feature type="disulfide bond" evidence="1">
    <location>
        <begin position="611"/>
        <end position="620"/>
    </location>
</feature>
<feature type="splice variant" id="VSP_001415" description="In isoform 6." evidence="21">
    <location>
        <begin position="1072"/>
        <end position="1708"/>
    </location>
</feature>
<feature type="splice variant" id="VSP_001414" description="In isoform 5." evidence="20">
    <location>
        <begin position="1072"/>
        <end position="1617"/>
    </location>
</feature>
<feature type="splice variant" id="VSP_001412" description="In isoform 2 and isoform 3." evidence="20">
    <location>
        <begin position="1072"/>
        <end position="1435"/>
    </location>
</feature>
<feature type="splice variant" id="VSP_001413" description="In isoform 2 and isoform 4." evidence="20">
    <location>
        <begin position="1527"/>
        <end position="1617"/>
    </location>
</feature>
<feature type="sequence variant" id="VAR_055778" description="In dbSNP:rs7020958.">
    <original>G</original>
    <variation>S</variation>
    <location>
        <position position="213"/>
    </location>
</feature>
<feature type="sequence variant" id="VAR_024266" description="In dbSNP:rs1757095." evidence="7 9 15">
    <original>Q</original>
    <variation>R</variation>
    <location>
        <position position="539"/>
    </location>
</feature>
<feature type="sequence variant" id="VAR_024267" description="In dbSNP:rs3827816.">
    <original>V</original>
    <variation>I</variation>
    <location>
        <position position="605"/>
    </location>
</feature>
<feature type="sequence variant" id="VAR_024268" description="In dbSNP:rs1061494." evidence="8">
    <original>Q</original>
    <variation>R</variation>
    <location>
        <position position="680"/>
    </location>
</feature>
<feature type="sequence variant" id="VAR_055779" description="In dbSNP:rs3748169.">
    <original>D</original>
    <variation>H</variation>
    <location>
        <position position="850"/>
    </location>
</feature>
<feature type="sequence variant" id="VAR_060738" description="In dbSNP:rs2104772." evidence="7 9 15 18">
    <original>I</original>
    <variation>L</variation>
    <location>
        <position position="1677"/>
    </location>
</feature>
<feature type="sequence variant" id="VAR_070984" description="In DFNA56; dbSNP:rs137933052." evidence="14">
    <original>V</original>
    <variation>M</variation>
    <location>
        <position position="1773"/>
    </location>
</feature>
<feature type="sequence variant" id="VAR_020169" description="In dbSNP:rs2274750.">
    <original>A</original>
    <variation>T</variation>
    <location>
        <position position="1781"/>
    </location>
</feature>
<feature type="sequence variant" id="VAR_070985" description="In DFNA56; dbSNP:rs431905513." evidence="14">
    <original>T</original>
    <variation>S</variation>
    <location>
        <position position="1796"/>
    </location>
</feature>
<feature type="sequence variant" id="VAR_014665" description="In dbSNP:rs13321." evidence="7 8 9 15 18">
    <original>E</original>
    <variation>Q</variation>
    <location>
        <position position="2008"/>
    </location>
</feature>
<feature type="sequence conflict" description="In Ref. 2; CAA39628." evidence="22" ref="2">
    <location>
        <position position="244"/>
    </location>
</feature>
<feature type="sequence conflict" description="In Ref. 1; no nucleotide entry, 3; AAA88083 and 4; CAA55309." evidence="22" ref="1 3 4">
    <original>V</original>
    <variation>L</variation>
    <location>
        <position position="370"/>
    </location>
</feature>
<feature type="sequence conflict" description="In Ref. 1; no nucleotide entry, 3; AAA88083 and 7; AAA52703." evidence="22" ref="1 3 7">
    <original>R</original>
    <variation>H</variation>
    <location>
        <position position="1066"/>
    </location>
</feature>
<feature type="sequence conflict" description="In Ref. 1; no nucleotide entry, 3; AAA88083 and 7; AAA52703." evidence="22" ref="1 3 7">
    <original>SGFTQGHQT</original>
    <variation>LWLHPRASN</variation>
    <location>
        <begin position="1600"/>
        <end position="1608"/>
    </location>
</feature>
<feature type="sequence conflict" description="In Ref. 1; no nucleotide entry and 3; AAA88083." evidence="22" ref="1 3">
    <original>F</original>
    <variation>FLH</variation>
    <location>
        <position position="2054"/>
    </location>
</feature>
<feature type="sequence conflict" description="In Ref. 7; AAA52703." evidence="22" ref="7">
    <original>W</original>
    <variation>L</variation>
    <location>
        <position position="2055"/>
    </location>
</feature>
<feature type="sequence conflict" description="In Ref. 2; CAA39628." evidence="22" ref="2">
    <original>YKGA</original>
    <variation>TRG</variation>
    <location>
        <begin position="2140"/>
        <end position="2143"/>
    </location>
</feature>
<feature type="strand" evidence="24">
    <location>
        <begin position="807"/>
        <end position="813"/>
    </location>
</feature>
<feature type="strand" evidence="24">
    <location>
        <begin position="819"/>
        <end position="824"/>
    </location>
</feature>
<feature type="helix" evidence="25">
    <location>
        <begin position="827"/>
        <end position="829"/>
    </location>
</feature>
<feature type="strand" evidence="24">
    <location>
        <begin position="831"/>
        <end position="839"/>
    </location>
</feature>
<feature type="strand" evidence="25">
    <location>
        <begin position="842"/>
        <end position="844"/>
    </location>
</feature>
<feature type="strand" evidence="24">
    <location>
        <begin position="847"/>
        <end position="852"/>
    </location>
</feature>
<feature type="helix" evidence="27">
    <location>
        <begin position="853"/>
        <end position="855"/>
    </location>
</feature>
<feature type="strand" evidence="24">
    <location>
        <begin position="857"/>
        <end position="860"/>
    </location>
</feature>
<feature type="strand" evidence="24">
    <location>
        <begin position="868"/>
        <end position="877"/>
    </location>
</feature>
<feature type="strand" evidence="24">
    <location>
        <begin position="885"/>
        <end position="890"/>
    </location>
</feature>
<feature type="strand" evidence="28">
    <location>
        <begin position="1977"/>
        <end position="1980"/>
    </location>
</feature>
<feature type="helix" evidence="26">
    <location>
        <begin position="1984"/>
        <end position="1989"/>
    </location>
</feature>
<feature type="strand" evidence="26">
    <location>
        <begin position="1996"/>
        <end position="2001"/>
    </location>
</feature>
<feature type="helix" evidence="26">
    <location>
        <begin position="2002"/>
        <end position="2004"/>
    </location>
</feature>
<feature type="strand" evidence="26">
    <location>
        <begin position="2008"/>
        <end position="2015"/>
    </location>
</feature>
<feature type="helix" evidence="26">
    <location>
        <begin position="2018"/>
        <end position="2020"/>
    </location>
</feature>
<feature type="strand" evidence="26">
    <location>
        <begin position="2023"/>
        <end position="2032"/>
    </location>
</feature>
<feature type="helix" evidence="26">
    <location>
        <begin position="2040"/>
        <end position="2045"/>
    </location>
</feature>
<feature type="strand" evidence="26">
    <location>
        <begin position="2052"/>
        <end position="2055"/>
    </location>
</feature>
<feature type="helix" evidence="26">
    <location>
        <begin position="2058"/>
        <end position="2065"/>
    </location>
</feature>
<feature type="strand" evidence="26">
    <location>
        <begin position="2070"/>
        <end position="2078"/>
    </location>
</feature>
<feature type="strand" evidence="26">
    <location>
        <begin position="2081"/>
        <end position="2092"/>
    </location>
</feature>
<feature type="helix" evidence="26">
    <location>
        <begin position="2095"/>
        <end position="2097"/>
    </location>
</feature>
<feature type="strand" evidence="26">
    <location>
        <begin position="2101"/>
        <end position="2110"/>
    </location>
</feature>
<feature type="helix" evidence="26">
    <location>
        <begin position="2115"/>
        <end position="2117"/>
    </location>
</feature>
<feature type="strand" evidence="29">
    <location>
        <begin position="2130"/>
        <end position="2134"/>
    </location>
</feature>
<feature type="helix" evidence="26">
    <location>
        <begin position="2136"/>
        <end position="2140"/>
    </location>
</feature>
<feature type="strand" evidence="26">
    <location>
        <begin position="2147"/>
        <end position="2149"/>
    </location>
</feature>
<feature type="strand" evidence="26">
    <location>
        <begin position="2151"/>
        <end position="2153"/>
    </location>
</feature>
<feature type="turn" evidence="26">
    <location>
        <begin position="2163"/>
        <end position="2165"/>
    </location>
</feature>
<feature type="strand" evidence="26">
    <location>
        <begin position="2166"/>
        <end position="2169"/>
    </location>
</feature>
<feature type="helix" evidence="26">
    <location>
        <begin position="2170"/>
        <end position="2173"/>
    </location>
</feature>
<feature type="strand" evidence="26">
    <location>
        <begin position="2180"/>
        <end position="2188"/>
    </location>
</feature>
<feature type="helix" evidence="26">
    <location>
        <begin position="2189"/>
        <end position="2193"/>
    </location>
</feature>
<sequence>MGAMTQLLAGVFLAFLALATEGGVLKKVIRHKRQSGVNATLPEENQPVVFNHVYNIKLPVGSQCSVDLESASGEKDLAPPSEPSESFQEHTVDGENQIVFTHRINIPRRACGCAAAPDVKELLSRLEELENLVSSLREQCTAGAGCCLQPATGRLDTRPFCSGRGNFSTEGCGCVCEPGWKGPNCSEPECPGNCHLRGRCIDGQCICDDGFTGEDCSQLACPSDCNDQGKCVNGVCICFEGYAGADCSREICPVPCSEEHGTCVDGLCVCHDGFAGDDCNKPLCLNNCYNRGRCVENECVCDEGFTGEDCSELICPNDCFDRGRCINGTCYCEEGFTGEDCGKPTCPHACHTQGRCEEGQCVCDEGFAGVDCSEKRCPADCHNRGRCVDGRCECDDGFTGADCGELKCPNGCSGHGRCVNGQCVCDEGYTGEDCSQLRCPNDCHSRGRCVEGKCVCEQGFKGYDCSDMSCPNDCHQHGRCVNGMCVCDDGYTGEDCRDRQCPRDCSNRGLCVDGQCVCEDGFTGPDCAELSCPNDCHGQGRCVNGQCVCHEGFMGKDCKEQRCPSDCHGQGRCVDGQCICHEGFTGLDCGQHSCPSDCNNLGQCVSGRCICNEGYSGEDCSEVSPPKDLVVTEVTEETVNLAWDNEMRVTEYLVVYTPTHEGGLEMQFRVPGDQTSTIIQELEPGVEYFIRVFAILENKKSIPVSARVATYLPAPEGLKFKSIKETSVEVEWDPLDIAFETWEIIFRNMNKEDEGEITKSLRRPETSYRQTGLAPGQEYEISLHIVKNNTRGPGLKRVTTTRLDAPSQIEVKDVTDTTALITWFKPLAEIDGIELTYGIKDVPGDRTTIDLTEDENQYSIGNLKPDTEYEVSLISRRGDMSSNPAKETFTTGLDAPRNLRRVSQTDNSITLEWRNGKAAIDSYRIKYAPISGGDHAEVDVPKSQQATTKTTLTGLRPGTEYGIGVSAVKEDKESNPATINAATELDTPKDLQVSETAETSLTLLWKTPLAKFDRYRLNYSLPTGQWVGVQLPRNTTSYVLRGLEPGQEYNVLLTAEKGRHKSKPARVKASTEQAPELENLTVTEVGWDGLRLNWTAADQAYEHFIIQVQEANKVEAARNLTVPGSLRAVDIPGLKAATPYTVSIYGVIQGYRTPVLSAEASTGETPNLGEVVVAEVGWDALKLNWTAPEGAYEYFFIQVQEADTVEAAQNLTVPGGLRSTDLPGLKAATHYTITIRGVTQDFSTTPLSVEVLTEEVPDMGNLTVTEVSWDALRLNWTTPDGTYDQFTIQVQEADQVEEAHNLTVPGSLRSMEIPGLRAGTPYTVTLHGEVRGHSTRPLAVEVVTEDLPQLGDLAVSEVGWDGLRLNWTAADNAYEHFVIQVQEVNKVEAAQNLTLPGSLRAVDIPGLEAATPYRVSIYGVIRGYRTPVLSAEASTAKEPEIGNLNVSDITPESFNLSWMATDGIFETFTIEIIDSNRLLETVEYNISGAERTAHISGLPPSTDFIVYLSGLAPSIRTKTISATATTEALPLLENLTISDINPYGFTVSWMASENAFDSFLVTVVDSGKLLDPQEFTLSGTQRKLELRGLITGIGYEVMVSGFTQGHQTKPLRAEIVTEAEPEVDNLLVSDATPDGFRLSWTADEGVFDNFVLKIRDTKKQSEPLEITLLAPERTRDITGLREATEYEIELYGISKGRRSQTVSAIATTAMGSPKEVIFSDITENSATVSWRAPTAQVESFRITYVPITGGTPSMVTVDGTKTQTRLVKLIPGVEYLVSIIAMKGFEESEPVSGSFTTALDGPSGLVTANITDSEALARWQPAIATVDSYVISYTGEKVPEITRTVSGNTVEYALTDLEPATEYTLRIFAEKGPQKSSTITAKFTTDLDSPRDLTATEVQSETALLTWRPPRASVTGYLLVYESVDGTVKEVIVGPDTTSYSLADLSPSTHYTAKIQALNGPLRSNMIQTIFTTIGLLYPFPKDCSQAMLNGDTTSGLYTIYLNGDKAEALEVFCDMTSDGGGWIVFLRRKNGRENFYQNWKAYAAGFGDRREEFWLGLDNLNKITAQGQYELRVDLRDHGETAFAVYDKFSVGDAKTRYKLKVEGYSGTAGDSMAYHNGRSFSTFDKDTDSAITNCALSYKGAFWYRNCHRVNLMGRYGDNNHSQGVNWFHWKGHEHSIQFAEMKLRPSNFRNLEGRRKRA</sequence>
<name>TENA_HUMAN</name>
<keyword id="KW-0002">3D-structure</keyword>
<keyword id="KW-0025">Alternative splicing</keyword>
<keyword id="KW-0130">Cell adhesion</keyword>
<keyword id="KW-0175">Coiled coil</keyword>
<keyword id="KW-0209">Deafness</keyword>
<keyword id="KW-0903">Direct protein sequencing</keyword>
<keyword id="KW-0225">Disease variant</keyword>
<keyword id="KW-1015">Disulfide bond</keyword>
<keyword id="KW-0245">EGF-like domain</keyword>
<keyword id="KW-0272">Extracellular matrix</keyword>
<keyword id="KW-0325">Glycoprotein</keyword>
<keyword id="KW-1010">Non-syndromic deafness</keyword>
<keyword id="KW-0597">Phosphoprotein</keyword>
<keyword id="KW-0654">Proteoglycan</keyword>
<keyword id="KW-1267">Proteomics identification</keyword>
<keyword id="KW-1185">Reference proteome</keyword>
<keyword id="KW-0677">Repeat</keyword>
<keyword id="KW-0964">Secreted</keyword>
<keyword id="KW-0732">Signal</keyword>